<dbReference type="EMBL" id="CP000800">
    <property type="protein sequence ID" value="ABV18846.1"/>
    <property type="molecule type" value="Genomic_DNA"/>
</dbReference>
<dbReference type="RefSeq" id="WP_000062611.1">
    <property type="nucleotide sequence ID" value="NC_009801.1"/>
</dbReference>
<dbReference type="SMR" id="A7ZSJ5"/>
<dbReference type="GeneID" id="93778681"/>
<dbReference type="KEGG" id="ecw:EcE24377A_3789"/>
<dbReference type="HOGENOM" id="CLU_098428_0_0_6"/>
<dbReference type="Proteomes" id="UP000001122">
    <property type="component" value="Chromosome"/>
</dbReference>
<dbReference type="GO" id="GO:1990904">
    <property type="term" value="C:ribonucleoprotein complex"/>
    <property type="evidence" value="ECO:0007669"/>
    <property type="project" value="UniProtKB-KW"/>
</dbReference>
<dbReference type="GO" id="GO:0005840">
    <property type="term" value="C:ribosome"/>
    <property type="evidence" value="ECO:0007669"/>
    <property type="project" value="UniProtKB-KW"/>
</dbReference>
<dbReference type="GO" id="GO:0019843">
    <property type="term" value="F:rRNA binding"/>
    <property type="evidence" value="ECO:0007669"/>
    <property type="project" value="UniProtKB-UniRule"/>
</dbReference>
<dbReference type="GO" id="GO:0003735">
    <property type="term" value="F:structural constituent of ribosome"/>
    <property type="evidence" value="ECO:0007669"/>
    <property type="project" value="InterPro"/>
</dbReference>
<dbReference type="GO" id="GO:0006412">
    <property type="term" value="P:translation"/>
    <property type="evidence" value="ECO:0007669"/>
    <property type="project" value="UniProtKB-UniRule"/>
</dbReference>
<dbReference type="FunFam" id="3.30.1370.30:FF:000003">
    <property type="entry name" value="30S ribosomal protein S8"/>
    <property type="match status" value="1"/>
</dbReference>
<dbReference type="FunFam" id="3.30.1490.10:FF:000001">
    <property type="entry name" value="30S ribosomal protein S8"/>
    <property type="match status" value="1"/>
</dbReference>
<dbReference type="Gene3D" id="3.30.1370.30">
    <property type="match status" value="1"/>
</dbReference>
<dbReference type="Gene3D" id="3.30.1490.10">
    <property type="match status" value="1"/>
</dbReference>
<dbReference type="HAMAP" id="MF_01302_B">
    <property type="entry name" value="Ribosomal_uS8_B"/>
    <property type="match status" value="1"/>
</dbReference>
<dbReference type="InterPro" id="IPR000630">
    <property type="entry name" value="Ribosomal_uS8"/>
</dbReference>
<dbReference type="InterPro" id="IPR047863">
    <property type="entry name" value="Ribosomal_uS8_CS"/>
</dbReference>
<dbReference type="InterPro" id="IPR035987">
    <property type="entry name" value="Ribosomal_uS8_sf"/>
</dbReference>
<dbReference type="NCBIfam" id="NF001109">
    <property type="entry name" value="PRK00136.1"/>
    <property type="match status" value="1"/>
</dbReference>
<dbReference type="PANTHER" id="PTHR11758">
    <property type="entry name" value="40S RIBOSOMAL PROTEIN S15A"/>
    <property type="match status" value="1"/>
</dbReference>
<dbReference type="Pfam" id="PF00410">
    <property type="entry name" value="Ribosomal_S8"/>
    <property type="match status" value="1"/>
</dbReference>
<dbReference type="SUPFAM" id="SSF56047">
    <property type="entry name" value="Ribosomal protein S8"/>
    <property type="match status" value="1"/>
</dbReference>
<dbReference type="PROSITE" id="PS00053">
    <property type="entry name" value="RIBOSOMAL_S8"/>
    <property type="match status" value="1"/>
</dbReference>
<name>RS8_ECO24</name>
<proteinExistence type="inferred from homology"/>
<accession>A7ZSJ5</accession>
<sequence length="130" mass="14127">MSMQDPIADMLTRIRNGQAANKAAVTMPSSKLKVAIANVLKEEGFIEDFKVEGDTKPELELTLKYFQGKAVVESIQRVSRPGLRIYKRKDELPKVMAGLGIAVVSTSKGVMTDRAARQAGLGGEIICYVA</sequence>
<comment type="function">
    <text evidence="1">One of the primary rRNA binding proteins, it binds directly to 16S rRNA central domain where it helps coordinate assembly of the platform of the 30S subunit.</text>
</comment>
<comment type="subunit">
    <text evidence="1">Part of the 30S ribosomal subunit. Contacts proteins S5 and S12.</text>
</comment>
<comment type="similarity">
    <text evidence="1">Belongs to the universal ribosomal protein uS8 family.</text>
</comment>
<evidence type="ECO:0000255" key="1">
    <source>
        <dbReference type="HAMAP-Rule" id="MF_01302"/>
    </source>
</evidence>
<evidence type="ECO:0000305" key="2"/>
<reference key="1">
    <citation type="journal article" date="2008" name="J. Bacteriol.">
        <title>The pangenome structure of Escherichia coli: comparative genomic analysis of E. coli commensal and pathogenic isolates.</title>
        <authorList>
            <person name="Rasko D.A."/>
            <person name="Rosovitz M.J."/>
            <person name="Myers G.S.A."/>
            <person name="Mongodin E.F."/>
            <person name="Fricke W.F."/>
            <person name="Gajer P."/>
            <person name="Crabtree J."/>
            <person name="Sebaihia M."/>
            <person name="Thomson N.R."/>
            <person name="Chaudhuri R."/>
            <person name="Henderson I.R."/>
            <person name="Sperandio V."/>
            <person name="Ravel J."/>
        </authorList>
    </citation>
    <scope>NUCLEOTIDE SEQUENCE [LARGE SCALE GENOMIC DNA]</scope>
    <source>
        <strain>E24377A / ETEC</strain>
    </source>
</reference>
<organism>
    <name type="scientific">Escherichia coli O139:H28 (strain E24377A / ETEC)</name>
    <dbReference type="NCBI Taxonomy" id="331111"/>
    <lineage>
        <taxon>Bacteria</taxon>
        <taxon>Pseudomonadati</taxon>
        <taxon>Pseudomonadota</taxon>
        <taxon>Gammaproteobacteria</taxon>
        <taxon>Enterobacterales</taxon>
        <taxon>Enterobacteriaceae</taxon>
        <taxon>Escherichia</taxon>
    </lineage>
</organism>
<gene>
    <name evidence="1" type="primary">rpsH</name>
    <name type="ordered locus">EcE24377A_3789</name>
</gene>
<keyword id="KW-1185">Reference proteome</keyword>
<keyword id="KW-0687">Ribonucleoprotein</keyword>
<keyword id="KW-0689">Ribosomal protein</keyword>
<keyword id="KW-0694">RNA-binding</keyword>
<keyword id="KW-0699">rRNA-binding</keyword>
<feature type="chain" id="PRO_1000067485" description="Small ribosomal subunit protein uS8">
    <location>
        <begin position="1"/>
        <end position="130"/>
    </location>
</feature>
<protein>
    <recommendedName>
        <fullName evidence="1">Small ribosomal subunit protein uS8</fullName>
    </recommendedName>
    <alternativeName>
        <fullName evidence="2">30S ribosomal protein S8</fullName>
    </alternativeName>
</protein>